<name>RS16_BRUME</name>
<feature type="chain" id="PRO_0000167161" description="Small ribosomal subunit protein bS16">
    <location>
        <begin position="1"/>
        <end position="134"/>
    </location>
</feature>
<feature type="region of interest" description="Disordered" evidence="2">
    <location>
        <begin position="79"/>
        <end position="134"/>
    </location>
</feature>
<feature type="compositionally biased region" description="Low complexity" evidence="2">
    <location>
        <begin position="115"/>
        <end position="134"/>
    </location>
</feature>
<keyword id="KW-0687">Ribonucleoprotein</keyword>
<keyword id="KW-0689">Ribosomal protein</keyword>
<gene>
    <name evidence="1" type="primary">rpsP</name>
    <name type="ordered locus">BMEI0227</name>
</gene>
<protein>
    <recommendedName>
        <fullName evidence="1">Small ribosomal subunit protein bS16</fullName>
    </recommendedName>
    <alternativeName>
        <fullName evidence="3">30S ribosomal protein S16</fullName>
    </alternativeName>
</protein>
<proteinExistence type="inferred from homology"/>
<comment type="similarity">
    <text evidence="1">Belongs to the bacterial ribosomal protein bS16 family.</text>
</comment>
<accession>P66433</accession>
<accession>Q8YJ59</accession>
<organism>
    <name type="scientific">Brucella melitensis biotype 1 (strain ATCC 23456 / CCUG 17765 / NCTC 10094 / 16M)</name>
    <dbReference type="NCBI Taxonomy" id="224914"/>
    <lineage>
        <taxon>Bacteria</taxon>
        <taxon>Pseudomonadati</taxon>
        <taxon>Pseudomonadota</taxon>
        <taxon>Alphaproteobacteria</taxon>
        <taxon>Hyphomicrobiales</taxon>
        <taxon>Brucellaceae</taxon>
        <taxon>Brucella/Ochrobactrum group</taxon>
        <taxon>Brucella</taxon>
    </lineage>
</organism>
<sequence>MALKIRLARAGSKKRPYYHVVVADVRAPRDGRFIETVGSWNPVLPKDAERVKLDAERIQHWIAQGAQPTDRVLRFLDQAGIAKRPSRNNPTKGEPGKKAQERLALAKQAEEEAAAKAAEAAAAAAAPAEEAASE</sequence>
<reference key="1">
    <citation type="journal article" date="2002" name="Proc. Natl. Acad. Sci. U.S.A.">
        <title>The genome sequence of the facultative intracellular pathogen Brucella melitensis.</title>
        <authorList>
            <person name="DelVecchio V.G."/>
            <person name="Kapatral V."/>
            <person name="Redkar R.J."/>
            <person name="Patra G."/>
            <person name="Mujer C."/>
            <person name="Los T."/>
            <person name="Ivanova N."/>
            <person name="Anderson I."/>
            <person name="Bhattacharyya A."/>
            <person name="Lykidis A."/>
            <person name="Reznik G."/>
            <person name="Jablonski L."/>
            <person name="Larsen N."/>
            <person name="D'Souza M."/>
            <person name="Bernal A."/>
            <person name="Mazur M."/>
            <person name="Goltsman E."/>
            <person name="Selkov E."/>
            <person name="Elzer P.H."/>
            <person name="Hagius S."/>
            <person name="O'Callaghan D."/>
            <person name="Letesson J.-J."/>
            <person name="Haselkorn R."/>
            <person name="Kyrpides N.C."/>
            <person name="Overbeek R."/>
        </authorList>
    </citation>
    <scope>NUCLEOTIDE SEQUENCE [LARGE SCALE GENOMIC DNA]</scope>
    <source>
        <strain>ATCC 23456 / CCUG 17765 / NCTC 10094 / 16M</strain>
    </source>
</reference>
<dbReference type="EMBL" id="AE008917">
    <property type="protein sequence ID" value="AAL51409.1"/>
    <property type="molecule type" value="Genomic_DNA"/>
</dbReference>
<dbReference type="PIR" id="AF3280">
    <property type="entry name" value="AF3280"/>
</dbReference>
<dbReference type="RefSeq" id="WP_002967942.1">
    <property type="nucleotide sequence ID" value="NZ_GG703781.1"/>
</dbReference>
<dbReference type="SMR" id="P66433"/>
<dbReference type="GeneID" id="97533054"/>
<dbReference type="KEGG" id="bme:BMEI0227"/>
<dbReference type="KEGG" id="bmel:DK63_1204"/>
<dbReference type="PATRIC" id="fig|224914.52.peg.1274"/>
<dbReference type="eggNOG" id="COG0228">
    <property type="taxonomic scope" value="Bacteria"/>
</dbReference>
<dbReference type="PhylomeDB" id="P66433"/>
<dbReference type="Proteomes" id="UP000000419">
    <property type="component" value="Chromosome I"/>
</dbReference>
<dbReference type="GO" id="GO:0005737">
    <property type="term" value="C:cytoplasm"/>
    <property type="evidence" value="ECO:0007669"/>
    <property type="project" value="UniProtKB-ARBA"/>
</dbReference>
<dbReference type="GO" id="GO:0015935">
    <property type="term" value="C:small ribosomal subunit"/>
    <property type="evidence" value="ECO:0007669"/>
    <property type="project" value="TreeGrafter"/>
</dbReference>
<dbReference type="GO" id="GO:0003735">
    <property type="term" value="F:structural constituent of ribosome"/>
    <property type="evidence" value="ECO:0007669"/>
    <property type="project" value="InterPro"/>
</dbReference>
<dbReference type="GO" id="GO:0006412">
    <property type="term" value="P:translation"/>
    <property type="evidence" value="ECO:0007669"/>
    <property type="project" value="UniProtKB-UniRule"/>
</dbReference>
<dbReference type="Gene3D" id="3.30.1320.10">
    <property type="match status" value="1"/>
</dbReference>
<dbReference type="HAMAP" id="MF_00385">
    <property type="entry name" value="Ribosomal_bS16"/>
    <property type="match status" value="1"/>
</dbReference>
<dbReference type="InterPro" id="IPR000307">
    <property type="entry name" value="Ribosomal_bS16"/>
</dbReference>
<dbReference type="InterPro" id="IPR023803">
    <property type="entry name" value="Ribosomal_bS16_dom_sf"/>
</dbReference>
<dbReference type="NCBIfam" id="TIGR00002">
    <property type="entry name" value="S16"/>
    <property type="match status" value="1"/>
</dbReference>
<dbReference type="PANTHER" id="PTHR12919">
    <property type="entry name" value="30S RIBOSOMAL PROTEIN S16"/>
    <property type="match status" value="1"/>
</dbReference>
<dbReference type="PANTHER" id="PTHR12919:SF20">
    <property type="entry name" value="SMALL RIBOSOMAL SUBUNIT PROTEIN BS16M"/>
    <property type="match status" value="1"/>
</dbReference>
<dbReference type="Pfam" id="PF00886">
    <property type="entry name" value="Ribosomal_S16"/>
    <property type="match status" value="1"/>
</dbReference>
<dbReference type="SUPFAM" id="SSF54565">
    <property type="entry name" value="Ribosomal protein S16"/>
    <property type="match status" value="1"/>
</dbReference>
<evidence type="ECO:0000255" key="1">
    <source>
        <dbReference type="HAMAP-Rule" id="MF_00385"/>
    </source>
</evidence>
<evidence type="ECO:0000256" key="2">
    <source>
        <dbReference type="SAM" id="MobiDB-lite"/>
    </source>
</evidence>
<evidence type="ECO:0000305" key="3"/>